<evidence type="ECO:0000250" key="1"/>
<evidence type="ECO:0000255" key="2"/>
<evidence type="ECO:0000256" key="3">
    <source>
        <dbReference type="SAM" id="MobiDB-lite"/>
    </source>
</evidence>
<evidence type="ECO:0000305" key="4"/>
<comment type="catalytic activity">
    <reaction>
        <text>(6R)-L-erythro-5,6,7,8-tetrahydrobiopterin + L-phenylalanine + O2 = (4aS,6R)-4a-hydroxy-L-erythro-5,6,7,8-tetrahydrobiopterin + L-tyrosine</text>
        <dbReference type="Rhea" id="RHEA:20273"/>
        <dbReference type="ChEBI" id="CHEBI:15379"/>
        <dbReference type="ChEBI" id="CHEBI:15642"/>
        <dbReference type="ChEBI" id="CHEBI:58095"/>
        <dbReference type="ChEBI" id="CHEBI:58315"/>
        <dbReference type="ChEBI" id="CHEBI:59560"/>
        <dbReference type="EC" id="1.14.16.1"/>
    </reaction>
</comment>
<comment type="cofactor">
    <cofactor evidence="1">
        <name>Fe(2+)</name>
        <dbReference type="ChEBI" id="CHEBI:29033"/>
    </cofactor>
    <text evidence="1">Binds 1 Fe(2+) ion.</text>
</comment>
<comment type="pathway">
    <text>Amino-acid degradation; L-phenylalanine degradation; acetoacetate and fumarate from L-phenylalanine: step 1/6.</text>
</comment>
<comment type="similarity">
    <text evidence="4">Belongs to the biopterin-dependent aromatic amino acid hydroxylase family.</text>
</comment>
<accession>Q9A7V7</accession>
<protein>
    <recommendedName>
        <fullName>Phenylalanine-4-hydroxylase</fullName>
        <shortName>PAH</shortName>
        <ecNumber>1.14.16.1</ecNumber>
    </recommendedName>
    <alternativeName>
        <fullName>Phe-4-monooxygenase</fullName>
    </alternativeName>
</protein>
<organism>
    <name type="scientific">Caulobacter vibrioides (strain ATCC 19089 / CIP 103742 / CB 15)</name>
    <name type="common">Caulobacter crescentus</name>
    <dbReference type="NCBI Taxonomy" id="190650"/>
    <lineage>
        <taxon>Bacteria</taxon>
        <taxon>Pseudomonadati</taxon>
        <taxon>Pseudomonadota</taxon>
        <taxon>Alphaproteobacteria</taxon>
        <taxon>Caulobacterales</taxon>
        <taxon>Caulobacteraceae</taxon>
        <taxon>Caulobacter</taxon>
    </lineage>
</organism>
<reference key="1">
    <citation type="journal article" date="2001" name="Proc. Natl. Acad. Sci. U.S.A.">
        <title>Complete genome sequence of Caulobacter crescentus.</title>
        <authorList>
            <person name="Nierman W.C."/>
            <person name="Feldblyum T.V."/>
            <person name="Laub M.T."/>
            <person name="Paulsen I.T."/>
            <person name="Nelson K.E."/>
            <person name="Eisen J.A."/>
            <person name="Heidelberg J.F."/>
            <person name="Alley M.R.K."/>
            <person name="Ohta N."/>
            <person name="Maddock J.R."/>
            <person name="Potocka I."/>
            <person name="Nelson W.C."/>
            <person name="Newton A."/>
            <person name="Stephens C."/>
            <person name="Phadke N.D."/>
            <person name="Ely B."/>
            <person name="DeBoy R.T."/>
            <person name="Dodson R.J."/>
            <person name="Durkin A.S."/>
            <person name="Gwinn M.L."/>
            <person name="Haft D.H."/>
            <person name="Kolonay J.F."/>
            <person name="Smit J."/>
            <person name="Craven M.B."/>
            <person name="Khouri H.M."/>
            <person name="Shetty J."/>
            <person name="Berry K.J."/>
            <person name="Utterback T.R."/>
            <person name="Tran K."/>
            <person name="Wolf A.M."/>
            <person name="Vamathevan J.J."/>
            <person name="Ermolaeva M.D."/>
            <person name="White O."/>
            <person name="Salzberg S.L."/>
            <person name="Venter J.C."/>
            <person name="Shapiro L."/>
            <person name="Fraser C.M."/>
        </authorList>
    </citation>
    <scope>NUCLEOTIDE SEQUENCE [LARGE SCALE GENOMIC DNA]</scope>
    <source>
        <strain>ATCC 19089 / CIP 103742 / CB 15</strain>
    </source>
</reference>
<gene>
    <name type="primary">phhA</name>
    <name type="ordered locus">CC_1612</name>
</gene>
<proteinExistence type="inferred from homology"/>
<dbReference type="EC" id="1.14.16.1"/>
<dbReference type="EMBL" id="AE005673">
    <property type="protein sequence ID" value="AAK23591.1"/>
    <property type="molecule type" value="Genomic_DNA"/>
</dbReference>
<dbReference type="PIR" id="C87449">
    <property type="entry name" value="C87449"/>
</dbReference>
<dbReference type="RefSeq" id="NP_420423.1">
    <property type="nucleotide sequence ID" value="NC_002696.2"/>
</dbReference>
<dbReference type="RefSeq" id="WP_010919486.1">
    <property type="nucleotide sequence ID" value="NC_002696.2"/>
</dbReference>
<dbReference type="SMR" id="Q9A7V7"/>
<dbReference type="STRING" id="190650.CC_1612"/>
<dbReference type="EnsemblBacteria" id="AAK23591">
    <property type="protein sequence ID" value="AAK23591"/>
    <property type="gene ID" value="CC_1612"/>
</dbReference>
<dbReference type="KEGG" id="ccr:CC_1612"/>
<dbReference type="PATRIC" id="fig|190650.5.peg.1639"/>
<dbReference type="eggNOG" id="COG3186">
    <property type="taxonomic scope" value="Bacteria"/>
</dbReference>
<dbReference type="HOGENOM" id="CLU_023198_1_0_5"/>
<dbReference type="BioCyc" id="CAULO:CC1612-MONOMER"/>
<dbReference type="UniPathway" id="UPA00139">
    <property type="reaction ID" value="UER00337"/>
</dbReference>
<dbReference type="Proteomes" id="UP000001816">
    <property type="component" value="Chromosome"/>
</dbReference>
<dbReference type="GO" id="GO:0005506">
    <property type="term" value="F:iron ion binding"/>
    <property type="evidence" value="ECO:0007669"/>
    <property type="project" value="InterPro"/>
</dbReference>
<dbReference type="GO" id="GO:0004505">
    <property type="term" value="F:phenylalanine 4-monooxygenase activity"/>
    <property type="evidence" value="ECO:0007669"/>
    <property type="project" value="UniProtKB-EC"/>
</dbReference>
<dbReference type="GO" id="GO:0006559">
    <property type="term" value="P:L-phenylalanine catabolic process"/>
    <property type="evidence" value="ECO:0007669"/>
    <property type="project" value="UniProtKB-UniPathway"/>
</dbReference>
<dbReference type="CDD" id="cd03348">
    <property type="entry name" value="pro_PheOH"/>
    <property type="match status" value="1"/>
</dbReference>
<dbReference type="Gene3D" id="1.10.800.10">
    <property type="entry name" value="Aromatic amino acid hydroxylase"/>
    <property type="match status" value="1"/>
</dbReference>
<dbReference type="InterPro" id="IPR001273">
    <property type="entry name" value="ArAA_hydroxylase"/>
</dbReference>
<dbReference type="InterPro" id="IPR018301">
    <property type="entry name" value="ArAA_hydroxylase_Fe/CU_BS"/>
</dbReference>
<dbReference type="InterPro" id="IPR036951">
    <property type="entry name" value="ArAA_hydroxylase_sf"/>
</dbReference>
<dbReference type="InterPro" id="IPR036329">
    <property type="entry name" value="Aro-AA_hydroxylase_C_sf"/>
</dbReference>
<dbReference type="InterPro" id="IPR019774">
    <property type="entry name" value="Aromatic-AA_hydroxylase_C"/>
</dbReference>
<dbReference type="InterPro" id="IPR005960">
    <property type="entry name" value="Phe-4-hydroxylase_mono"/>
</dbReference>
<dbReference type="NCBIfam" id="TIGR01267">
    <property type="entry name" value="Phe4hydrox_mono"/>
    <property type="match status" value="1"/>
</dbReference>
<dbReference type="NCBIfam" id="NF008877">
    <property type="entry name" value="PRK11913.1-2"/>
    <property type="match status" value="1"/>
</dbReference>
<dbReference type="PANTHER" id="PTHR11473">
    <property type="entry name" value="AROMATIC AMINO ACID HYDROXYLASE"/>
    <property type="match status" value="1"/>
</dbReference>
<dbReference type="PANTHER" id="PTHR11473:SF24">
    <property type="entry name" value="PHENYLALANINE-4-HYDROXYLASE"/>
    <property type="match status" value="1"/>
</dbReference>
<dbReference type="Pfam" id="PF00351">
    <property type="entry name" value="Biopterin_H"/>
    <property type="match status" value="1"/>
</dbReference>
<dbReference type="PRINTS" id="PR00372">
    <property type="entry name" value="FYWHYDRXLASE"/>
</dbReference>
<dbReference type="SUPFAM" id="SSF56534">
    <property type="entry name" value="Aromatic aminoacid monoxygenases, catalytic and oligomerization domains"/>
    <property type="match status" value="1"/>
</dbReference>
<dbReference type="PROSITE" id="PS00367">
    <property type="entry name" value="BH4_AAA_HYDROXYL_1"/>
    <property type="match status" value="1"/>
</dbReference>
<dbReference type="PROSITE" id="PS51410">
    <property type="entry name" value="BH4_AAA_HYDROXYL_2"/>
    <property type="match status" value="1"/>
</dbReference>
<sequence>MSGDGLSNGPPPGARPDWTIDQGWETYTQAEHDVWITLYERQTDMLHGRACDEFMRGLDALDLHRSGIPDFARINEELKRLTGWTVVAVPGLVPDDVFFDHLANRRFPAGQFIRKPHELDYLQEPDIFHDVFGHVPMLTDPVFADYMQAYGEGGRRALGLGRLANLARLYWYTVEFGLMNTPAGLRIYGAGIVSSRTESIFALDDPSPNRIGFDLERVMRTLYRIDDFQQVYFVIDSIQTLQEVTLRDFGAIYERLASVSDIGVAEIVPGDAVLTRGTQAYATAGGRLAGAAAG</sequence>
<feature type="chain" id="PRO_0000205554" description="Phenylalanine-4-hydroxylase">
    <location>
        <begin position="1"/>
        <end position="294"/>
    </location>
</feature>
<feature type="region of interest" description="Disordered" evidence="3">
    <location>
        <begin position="1"/>
        <end position="20"/>
    </location>
</feature>
<feature type="binding site" evidence="2">
    <location>
        <position position="129"/>
    </location>
    <ligand>
        <name>Fe cation</name>
        <dbReference type="ChEBI" id="CHEBI:24875"/>
    </ligand>
</feature>
<feature type="binding site" evidence="2">
    <location>
        <position position="134"/>
    </location>
    <ligand>
        <name>Fe cation</name>
        <dbReference type="ChEBI" id="CHEBI:24875"/>
    </ligand>
</feature>
<feature type="binding site" evidence="2">
    <location>
        <position position="175"/>
    </location>
    <ligand>
        <name>Fe cation</name>
        <dbReference type="ChEBI" id="CHEBI:24875"/>
    </ligand>
</feature>
<name>PH4H_CAUVC</name>
<keyword id="KW-0408">Iron</keyword>
<keyword id="KW-0479">Metal-binding</keyword>
<keyword id="KW-0503">Monooxygenase</keyword>
<keyword id="KW-0560">Oxidoreductase</keyword>
<keyword id="KW-0585">Phenylalanine catabolism</keyword>
<keyword id="KW-1185">Reference proteome</keyword>